<evidence type="ECO:0000250" key="1"/>
<evidence type="ECO:0000250" key="2">
    <source>
        <dbReference type="UniProtKB" id="P00157"/>
    </source>
</evidence>
<evidence type="ECO:0000255" key="3">
    <source>
        <dbReference type="PROSITE-ProRule" id="PRU00967"/>
    </source>
</evidence>
<evidence type="ECO:0000255" key="4">
    <source>
        <dbReference type="PROSITE-ProRule" id="PRU00968"/>
    </source>
</evidence>
<keyword id="KW-0249">Electron transport</keyword>
<keyword id="KW-0349">Heme</keyword>
<keyword id="KW-0408">Iron</keyword>
<keyword id="KW-0472">Membrane</keyword>
<keyword id="KW-0479">Metal-binding</keyword>
<keyword id="KW-0496">Mitochondrion</keyword>
<keyword id="KW-0999">Mitochondrion inner membrane</keyword>
<keyword id="KW-0679">Respiratory chain</keyword>
<keyword id="KW-0812">Transmembrane</keyword>
<keyword id="KW-1133">Transmembrane helix</keyword>
<keyword id="KW-0813">Transport</keyword>
<keyword id="KW-0830">Ubiquinone</keyword>
<gene>
    <name type="primary">MT-CYB</name>
    <name type="synonym">COB</name>
    <name type="synonym">CYTB</name>
    <name type="synonym">MTCYB</name>
</gene>
<protein>
    <recommendedName>
        <fullName>Cytochrome b</fullName>
    </recommendedName>
    <alternativeName>
        <fullName>Complex III subunit 3</fullName>
    </alternativeName>
    <alternativeName>
        <fullName>Complex III subunit III</fullName>
    </alternativeName>
    <alternativeName>
        <fullName>Cytochrome b-c1 complex subunit 3</fullName>
    </alternativeName>
    <alternativeName>
        <fullName>Ubiquinol-cytochrome-c reductase complex cytochrome b subunit</fullName>
    </alternativeName>
</protein>
<geneLocation type="mitochondrion"/>
<name>CYB_CRACA</name>
<comment type="function">
    <text evidence="2">Component of the ubiquinol-cytochrome c reductase complex (complex III or cytochrome b-c1 complex) that is part of the mitochondrial respiratory chain. The b-c1 complex mediates electron transfer from ubiquinol to cytochrome c. Contributes to the generation of a proton gradient across the mitochondrial membrane that is then used for ATP synthesis.</text>
</comment>
<comment type="cofactor">
    <cofactor evidence="2">
        <name>heme b</name>
        <dbReference type="ChEBI" id="CHEBI:60344"/>
    </cofactor>
    <text evidence="2">Binds 2 heme b groups non-covalently.</text>
</comment>
<comment type="subunit">
    <text evidence="2">The cytochrome bc1 complex contains 11 subunits: 3 respiratory subunits (MT-CYB, CYC1 and UQCRFS1), 2 core proteins (UQCRC1 and UQCRC2) and 6 low-molecular weight proteins (UQCRH/QCR6, UQCRB/QCR7, UQCRQ/QCR8, UQCR10/QCR9, UQCR11/QCR10 and a cleavage product of UQCRFS1). This cytochrome bc1 complex then forms a dimer.</text>
</comment>
<comment type="subcellular location">
    <subcellularLocation>
        <location evidence="2">Mitochondrion inner membrane</location>
        <topology evidence="2">Multi-pass membrane protein</topology>
    </subcellularLocation>
</comment>
<comment type="miscellaneous">
    <text evidence="1">Heme 1 (or BL or b562) is low-potential and absorbs at about 562 nm, and heme 2 (or BH or b566) is high-potential and absorbs at about 566 nm.</text>
</comment>
<comment type="similarity">
    <text evidence="3 4">Belongs to the cytochrome b family.</text>
</comment>
<comment type="caution">
    <text evidence="2">The full-length protein contains only eight transmembrane helices, not nine as predicted by bioinformatics tools.</text>
</comment>
<reference key="1">
    <citation type="journal article" date="2002" name="Mol. Phylogenet. Evol.">
        <title>Systematics and phylogeography of pocket gophers in the genera Cratogeomys and Pappogeomys.</title>
        <authorList>
            <person name="Demastes J.W."/>
            <person name="Spradling T.A."/>
            <person name="Hafner M.S."/>
            <person name="Hafner D.J."/>
            <person name="Reed D.L."/>
        </authorList>
    </citation>
    <scope>NUCLEOTIDE SEQUENCE [GENOMIC DNA]</scope>
    <source>
        <strain>Isolate G25</strain>
    </source>
</reference>
<accession>Q8WDV0</accession>
<sequence>MTIMRKSHPLMKIVNHAFIDLPTPPNISGWWNFGSLLGLCLMLQIFTGLFLAMHYTSDTMTAFSSVTHICRDVNYGWLIRYMHANGASLFFICLYIHIGRGIYYGSYLYKETWNIGILLLFLTMATAFVGYVLPWGQMSFWGATVITNLLSAIPYIGQDLVEWIWGGFSVDKATLTRFFAFHFILPFIITALVMVHLLFLHETGSNNPLGLPSDCGKVPFHPYYTTKDFMGVILLLTLFMTLVLFFPDKLGDPDNYTPANPLNTPPHIKPEWYFLFAYAILRSIPNKLGGVMALVFSILVLALLPYLHTSKQRSLSFRPLSQTLFWILVSDVITLTWIGGQPVEPPYIIIGQVASVLYFLIILILMPIAGLIENKKLKW</sequence>
<organism>
    <name type="scientific">Cratogeomys castanops</name>
    <name type="common">Yellow-faced pocket gopher</name>
    <name type="synonym">Pappogeomys castanops</name>
    <dbReference type="NCBI Taxonomy" id="37441"/>
    <lineage>
        <taxon>Eukaryota</taxon>
        <taxon>Metazoa</taxon>
        <taxon>Chordata</taxon>
        <taxon>Craniata</taxon>
        <taxon>Vertebrata</taxon>
        <taxon>Euteleostomi</taxon>
        <taxon>Mammalia</taxon>
        <taxon>Eutheria</taxon>
        <taxon>Euarchontoglires</taxon>
        <taxon>Glires</taxon>
        <taxon>Rodentia</taxon>
        <taxon>Castorimorpha</taxon>
        <taxon>Geomyidae</taxon>
        <taxon>Cratogeomys</taxon>
    </lineage>
</organism>
<proteinExistence type="inferred from homology"/>
<feature type="chain" id="PRO_0000060815" description="Cytochrome b">
    <location>
        <begin position="1"/>
        <end position="379"/>
    </location>
</feature>
<feature type="transmembrane region" description="Helical" evidence="2">
    <location>
        <begin position="33"/>
        <end position="53"/>
    </location>
</feature>
<feature type="transmembrane region" description="Helical" evidence="2">
    <location>
        <begin position="77"/>
        <end position="98"/>
    </location>
</feature>
<feature type="transmembrane region" description="Helical" evidence="2">
    <location>
        <begin position="113"/>
        <end position="133"/>
    </location>
</feature>
<feature type="transmembrane region" description="Helical" evidence="2">
    <location>
        <begin position="178"/>
        <end position="198"/>
    </location>
</feature>
<feature type="transmembrane region" description="Helical" evidence="2">
    <location>
        <begin position="226"/>
        <end position="246"/>
    </location>
</feature>
<feature type="transmembrane region" description="Helical" evidence="2">
    <location>
        <begin position="288"/>
        <end position="308"/>
    </location>
</feature>
<feature type="transmembrane region" description="Helical" evidence="2">
    <location>
        <begin position="320"/>
        <end position="340"/>
    </location>
</feature>
<feature type="transmembrane region" description="Helical" evidence="2">
    <location>
        <begin position="347"/>
        <end position="367"/>
    </location>
</feature>
<feature type="binding site" description="axial binding residue" evidence="2">
    <location>
        <position position="83"/>
    </location>
    <ligand>
        <name>heme b</name>
        <dbReference type="ChEBI" id="CHEBI:60344"/>
        <label>b562</label>
    </ligand>
    <ligandPart>
        <name>Fe</name>
        <dbReference type="ChEBI" id="CHEBI:18248"/>
    </ligandPart>
</feature>
<feature type="binding site" description="axial binding residue" evidence="2">
    <location>
        <position position="97"/>
    </location>
    <ligand>
        <name>heme b</name>
        <dbReference type="ChEBI" id="CHEBI:60344"/>
        <label>b566</label>
    </ligand>
    <ligandPart>
        <name>Fe</name>
        <dbReference type="ChEBI" id="CHEBI:18248"/>
    </ligandPart>
</feature>
<feature type="binding site" description="axial binding residue" evidence="2">
    <location>
        <position position="182"/>
    </location>
    <ligand>
        <name>heme b</name>
        <dbReference type="ChEBI" id="CHEBI:60344"/>
        <label>b562</label>
    </ligand>
    <ligandPart>
        <name>Fe</name>
        <dbReference type="ChEBI" id="CHEBI:18248"/>
    </ligandPart>
</feature>
<feature type="binding site" description="axial binding residue" evidence="2">
    <location>
        <position position="196"/>
    </location>
    <ligand>
        <name>heme b</name>
        <dbReference type="ChEBI" id="CHEBI:60344"/>
        <label>b566</label>
    </ligand>
    <ligandPart>
        <name>Fe</name>
        <dbReference type="ChEBI" id="CHEBI:18248"/>
    </ligandPart>
</feature>
<feature type="binding site" evidence="2">
    <location>
        <position position="201"/>
    </location>
    <ligand>
        <name>a ubiquinone</name>
        <dbReference type="ChEBI" id="CHEBI:16389"/>
    </ligand>
</feature>
<dbReference type="EMBL" id="AF302172">
    <property type="protein sequence ID" value="AAL69585.1"/>
    <property type="molecule type" value="Genomic_DNA"/>
</dbReference>
<dbReference type="SMR" id="Q8WDV0"/>
<dbReference type="GO" id="GO:0005743">
    <property type="term" value="C:mitochondrial inner membrane"/>
    <property type="evidence" value="ECO:0007669"/>
    <property type="project" value="UniProtKB-SubCell"/>
</dbReference>
<dbReference type="GO" id="GO:0045275">
    <property type="term" value="C:respiratory chain complex III"/>
    <property type="evidence" value="ECO:0007669"/>
    <property type="project" value="InterPro"/>
</dbReference>
<dbReference type="GO" id="GO:0046872">
    <property type="term" value="F:metal ion binding"/>
    <property type="evidence" value="ECO:0007669"/>
    <property type="project" value="UniProtKB-KW"/>
</dbReference>
<dbReference type="GO" id="GO:0008121">
    <property type="term" value="F:ubiquinol-cytochrome-c reductase activity"/>
    <property type="evidence" value="ECO:0007669"/>
    <property type="project" value="InterPro"/>
</dbReference>
<dbReference type="GO" id="GO:0006122">
    <property type="term" value="P:mitochondrial electron transport, ubiquinol to cytochrome c"/>
    <property type="evidence" value="ECO:0007669"/>
    <property type="project" value="TreeGrafter"/>
</dbReference>
<dbReference type="CDD" id="cd00290">
    <property type="entry name" value="cytochrome_b_C"/>
    <property type="match status" value="1"/>
</dbReference>
<dbReference type="CDD" id="cd00284">
    <property type="entry name" value="Cytochrome_b_N"/>
    <property type="match status" value="1"/>
</dbReference>
<dbReference type="FunFam" id="1.20.810.10:FF:000002">
    <property type="entry name" value="Cytochrome b"/>
    <property type="match status" value="1"/>
</dbReference>
<dbReference type="Gene3D" id="1.20.810.10">
    <property type="entry name" value="Cytochrome Bc1 Complex, Chain C"/>
    <property type="match status" value="1"/>
</dbReference>
<dbReference type="InterPro" id="IPR005798">
    <property type="entry name" value="Cyt_b/b6_C"/>
</dbReference>
<dbReference type="InterPro" id="IPR036150">
    <property type="entry name" value="Cyt_b/b6_C_sf"/>
</dbReference>
<dbReference type="InterPro" id="IPR005797">
    <property type="entry name" value="Cyt_b/b6_N"/>
</dbReference>
<dbReference type="InterPro" id="IPR027387">
    <property type="entry name" value="Cytb/b6-like_sf"/>
</dbReference>
<dbReference type="InterPro" id="IPR030689">
    <property type="entry name" value="Cytochrome_b"/>
</dbReference>
<dbReference type="InterPro" id="IPR048260">
    <property type="entry name" value="Cytochrome_b_C_euk/bac"/>
</dbReference>
<dbReference type="InterPro" id="IPR048259">
    <property type="entry name" value="Cytochrome_b_N_euk/bac"/>
</dbReference>
<dbReference type="InterPro" id="IPR016174">
    <property type="entry name" value="Di-haem_cyt_TM"/>
</dbReference>
<dbReference type="PANTHER" id="PTHR19271">
    <property type="entry name" value="CYTOCHROME B"/>
    <property type="match status" value="1"/>
</dbReference>
<dbReference type="PANTHER" id="PTHR19271:SF16">
    <property type="entry name" value="CYTOCHROME B"/>
    <property type="match status" value="1"/>
</dbReference>
<dbReference type="Pfam" id="PF00032">
    <property type="entry name" value="Cytochrom_B_C"/>
    <property type="match status" value="1"/>
</dbReference>
<dbReference type="Pfam" id="PF00033">
    <property type="entry name" value="Cytochrome_B"/>
    <property type="match status" value="1"/>
</dbReference>
<dbReference type="PIRSF" id="PIRSF038885">
    <property type="entry name" value="COB"/>
    <property type="match status" value="1"/>
</dbReference>
<dbReference type="SUPFAM" id="SSF81648">
    <property type="entry name" value="a domain/subunit of cytochrome bc1 complex (Ubiquinol-cytochrome c reductase)"/>
    <property type="match status" value="1"/>
</dbReference>
<dbReference type="SUPFAM" id="SSF81342">
    <property type="entry name" value="Transmembrane di-heme cytochromes"/>
    <property type="match status" value="1"/>
</dbReference>
<dbReference type="PROSITE" id="PS51003">
    <property type="entry name" value="CYTB_CTER"/>
    <property type="match status" value="1"/>
</dbReference>
<dbReference type="PROSITE" id="PS51002">
    <property type="entry name" value="CYTB_NTER"/>
    <property type="match status" value="1"/>
</dbReference>